<reference key="1">
    <citation type="journal article" date="1998" name="Exp. Parasitol.">
        <title>Anisakis simplex: mutational bursts in the reactive site centers of serine protease inhibitors from an ascarid nematode.</title>
        <authorList>
            <person name="Lu C.C."/>
            <person name="Nguyen T."/>
            <person name="Morris S."/>
            <person name="Hill D."/>
            <person name="Sakanari J.A."/>
        </authorList>
    </citation>
    <scope>NUCLEOTIDE SEQUENCE [MRNA]</scope>
</reference>
<feature type="signal peptide" evidence="2">
    <location>
        <begin position="1"/>
        <end position="17"/>
    </location>
</feature>
<feature type="chain" id="PRO_0000034306" description="Serine protease inhibitor 1">
    <location>
        <begin position="18"/>
        <end position="77"/>
    </location>
</feature>
<feature type="domain" description="TIL">
    <location>
        <begin position="21"/>
        <end position="74"/>
    </location>
</feature>
<feature type="site" description="Reactive bond" evidence="1">
    <location>
        <begin position="46"/>
        <end position="47"/>
    </location>
</feature>
<feature type="disulfide bond" evidence="1">
    <location>
        <begin position="21"/>
        <end position="53"/>
    </location>
</feature>
<feature type="disulfide bond" evidence="1">
    <location>
        <begin position="30"/>
        <end position="48"/>
    </location>
</feature>
<feature type="disulfide bond" evidence="1">
    <location>
        <begin position="33"/>
        <end position="44"/>
    </location>
</feature>
<feature type="disulfide bond" evidence="1">
    <location>
        <begin position="37"/>
        <end position="74"/>
    </location>
</feature>
<feature type="disulfide bond" evidence="1">
    <location>
        <begin position="55"/>
        <end position="68"/>
    </location>
</feature>
<dbReference type="EMBL" id="U94496">
    <property type="protein sequence ID" value="AAC61297.1"/>
    <property type="molecule type" value="mRNA"/>
</dbReference>
<dbReference type="SMR" id="O77416"/>
<dbReference type="MEROPS" id="I08.005"/>
<dbReference type="GO" id="GO:0005576">
    <property type="term" value="C:extracellular region"/>
    <property type="evidence" value="ECO:0007669"/>
    <property type="project" value="UniProtKB-SubCell"/>
</dbReference>
<dbReference type="GO" id="GO:0004867">
    <property type="term" value="F:serine-type endopeptidase inhibitor activity"/>
    <property type="evidence" value="ECO:0007669"/>
    <property type="project" value="UniProtKB-KW"/>
</dbReference>
<dbReference type="Gene3D" id="2.10.25.10">
    <property type="entry name" value="Laminin"/>
    <property type="match status" value="1"/>
</dbReference>
<dbReference type="InterPro" id="IPR036084">
    <property type="entry name" value="Ser_inhib-like_sf"/>
</dbReference>
<dbReference type="SUPFAM" id="SSF57567">
    <property type="entry name" value="Serine protease inhibitors"/>
    <property type="match status" value="1"/>
</dbReference>
<organism>
    <name type="scientific">Anisakis simplex</name>
    <name type="common">Herring worm</name>
    <dbReference type="NCBI Taxonomy" id="6269"/>
    <lineage>
        <taxon>Eukaryota</taxon>
        <taxon>Metazoa</taxon>
        <taxon>Ecdysozoa</taxon>
        <taxon>Nematoda</taxon>
        <taxon>Chromadorea</taxon>
        <taxon>Rhabditida</taxon>
        <taxon>Spirurina</taxon>
        <taxon>Ascaridomorpha</taxon>
        <taxon>Ascaridoidea</taxon>
        <taxon>Anisakidae</taxon>
        <taxon>Anisakis</taxon>
        <taxon>Anisakis simplex complex</taxon>
    </lineage>
</organism>
<keyword id="KW-1015">Disulfide bond</keyword>
<keyword id="KW-0646">Protease inhibitor</keyword>
<keyword id="KW-0964">Secreted</keyword>
<keyword id="KW-0722">Serine protease inhibitor</keyword>
<keyword id="KW-0732">Signal</keyword>
<sequence>MMFTPLIVLTLLVLATAEHQCGPNEQWSDCPGCELQCGESDKPCPAMCGDPKCYCSPDQYRRIPDGRCIRKIQCPQH</sequence>
<comment type="function">
    <text evidence="1">Defends the organism against the host's proteinases.</text>
</comment>
<comment type="subcellular location">
    <subcellularLocation>
        <location evidence="1">Secreted</location>
    </subcellularLocation>
</comment>
<accession>O77416</accession>
<protein>
    <recommendedName>
        <fullName>Serine protease inhibitor 1</fullName>
    </recommendedName>
    <alternativeName>
        <fullName>ASPI-1</fullName>
    </alternativeName>
</protein>
<evidence type="ECO:0000250" key="1"/>
<evidence type="ECO:0000255" key="2"/>
<name>ASP1_ANISI</name>
<proteinExistence type="inferred from homology"/>